<reference key="1">
    <citation type="journal article" date="2000" name="Nature">
        <title>Sequence and analysis of chromosome 1 of the plant Arabidopsis thaliana.</title>
        <authorList>
            <person name="Theologis A."/>
            <person name="Ecker J.R."/>
            <person name="Palm C.J."/>
            <person name="Federspiel N.A."/>
            <person name="Kaul S."/>
            <person name="White O."/>
            <person name="Alonso J."/>
            <person name="Altafi H."/>
            <person name="Araujo R."/>
            <person name="Bowman C.L."/>
            <person name="Brooks S.Y."/>
            <person name="Buehler E."/>
            <person name="Chan A."/>
            <person name="Chao Q."/>
            <person name="Chen H."/>
            <person name="Cheuk R.F."/>
            <person name="Chin C.W."/>
            <person name="Chung M.K."/>
            <person name="Conn L."/>
            <person name="Conway A.B."/>
            <person name="Conway A.R."/>
            <person name="Creasy T.H."/>
            <person name="Dewar K."/>
            <person name="Dunn P."/>
            <person name="Etgu P."/>
            <person name="Feldblyum T.V."/>
            <person name="Feng J.-D."/>
            <person name="Fong B."/>
            <person name="Fujii C.Y."/>
            <person name="Gill J.E."/>
            <person name="Goldsmith A.D."/>
            <person name="Haas B."/>
            <person name="Hansen N.F."/>
            <person name="Hughes B."/>
            <person name="Huizar L."/>
            <person name="Hunter J.L."/>
            <person name="Jenkins J."/>
            <person name="Johnson-Hopson C."/>
            <person name="Khan S."/>
            <person name="Khaykin E."/>
            <person name="Kim C.J."/>
            <person name="Koo H.L."/>
            <person name="Kremenetskaia I."/>
            <person name="Kurtz D.B."/>
            <person name="Kwan A."/>
            <person name="Lam B."/>
            <person name="Langin-Hooper S."/>
            <person name="Lee A."/>
            <person name="Lee J.M."/>
            <person name="Lenz C.A."/>
            <person name="Li J.H."/>
            <person name="Li Y.-P."/>
            <person name="Lin X."/>
            <person name="Liu S.X."/>
            <person name="Liu Z.A."/>
            <person name="Luros J.S."/>
            <person name="Maiti R."/>
            <person name="Marziali A."/>
            <person name="Militscher J."/>
            <person name="Miranda M."/>
            <person name="Nguyen M."/>
            <person name="Nierman W.C."/>
            <person name="Osborne B.I."/>
            <person name="Pai G."/>
            <person name="Peterson J."/>
            <person name="Pham P.K."/>
            <person name="Rizzo M."/>
            <person name="Rooney T."/>
            <person name="Rowley D."/>
            <person name="Sakano H."/>
            <person name="Salzberg S.L."/>
            <person name="Schwartz J.R."/>
            <person name="Shinn P."/>
            <person name="Southwick A.M."/>
            <person name="Sun H."/>
            <person name="Tallon L.J."/>
            <person name="Tambunga G."/>
            <person name="Toriumi M.J."/>
            <person name="Town C.D."/>
            <person name="Utterback T."/>
            <person name="Van Aken S."/>
            <person name="Vaysberg M."/>
            <person name="Vysotskaia V.S."/>
            <person name="Walker M."/>
            <person name="Wu D."/>
            <person name="Yu G."/>
            <person name="Fraser C.M."/>
            <person name="Venter J.C."/>
            <person name="Davis R.W."/>
        </authorList>
    </citation>
    <scope>NUCLEOTIDE SEQUENCE [LARGE SCALE GENOMIC DNA]</scope>
    <source>
        <strain>cv. Columbia</strain>
    </source>
</reference>
<reference key="2">
    <citation type="journal article" date="2017" name="Plant J.">
        <title>Araport11: a complete reannotation of the Arabidopsis thaliana reference genome.</title>
        <authorList>
            <person name="Cheng C.Y."/>
            <person name="Krishnakumar V."/>
            <person name="Chan A.P."/>
            <person name="Thibaud-Nissen F."/>
            <person name="Schobel S."/>
            <person name="Town C.D."/>
        </authorList>
    </citation>
    <scope>GENOME REANNOTATION</scope>
    <source>
        <strain>cv. Columbia</strain>
    </source>
</reference>
<protein>
    <recommendedName>
        <fullName>F-box/kelch-repeat protein At1g25055</fullName>
    </recommendedName>
</protein>
<proteinExistence type="predicted"/>
<sequence>MRRRRCDLQPKRTRMCDLQPKRTSMCDLPPKLVGEKILTRIPITSLRAVRSTCKLWNALTKDRVLGKAAAQFLGFMTMDSKVCSVRFHLRRSKEEEEDTMDLSIKQVDLLNQVEISRVYHCDGLLLCVAKDNSRVVVWNPYLGQTRWIRPRTESNIGDSYALGYDINRNHKILRMVQTRNVSVYRYEIYDLRSNSWRVLEVTPNGEMDPNHPLYGVSVKGNTYFFAHEDSSSGEIDEDGDIIDLEDFLLCFDFTTETFGLRLPLPFHSTIDATVTLSCVRDQQLAVLYHNEGLHSDDRFTTVEFWVTTSIEPNSVSWSKFLTVDMRPLALTGVRFDNDMGATFFIDEDEKVAVVFDLDGYLSTESARYHTAFISGKDGFFKPVTLGVAPNVGEPCPRTGHIPTTYRPPLVCSSTYLPSLVQVNQQRKRKERHV</sequence>
<keyword id="KW-0880">Kelch repeat</keyword>
<keyword id="KW-1185">Reference proteome</keyword>
<keyword id="KW-0677">Repeat</keyword>
<comment type="sequence caution" evidence="1">
    <conflict type="erroneous gene model prediction">
        <sequence resource="EMBL-CDS" id="AAG03128"/>
    </conflict>
    <text>The predicted gene has been split into 2 genes: At1g25054 and At1g25055.</text>
</comment>
<evidence type="ECO:0000305" key="1"/>
<gene>
    <name type="ordered locus">At1g25055</name>
    <name type="ORF">F5A9.8</name>
</gene>
<dbReference type="EMBL" id="AC004133">
    <property type="protein sequence ID" value="AAG03128.1"/>
    <property type="status" value="ALT_SEQ"/>
    <property type="molecule type" value="Genomic_DNA"/>
</dbReference>
<dbReference type="EMBL" id="CP002684">
    <property type="protein sequence ID" value="AEE30577.1"/>
    <property type="molecule type" value="Genomic_DNA"/>
</dbReference>
<dbReference type="PIR" id="G86380">
    <property type="entry name" value="G86380"/>
</dbReference>
<dbReference type="RefSeq" id="NP_001117347.1">
    <property type="nucleotide sequence ID" value="NM_001123875.2"/>
</dbReference>
<dbReference type="RefSeq" id="NP_001117348.1">
    <property type="nucleotide sequence ID" value="NM_001123876.1"/>
</dbReference>
<dbReference type="RefSeq" id="NP_001117350.1">
    <property type="nucleotide sequence ID" value="NM_001123878.4"/>
</dbReference>
<dbReference type="RefSeq" id="NP_001117352.1">
    <property type="nucleotide sequence ID" value="NM_001123880.1"/>
</dbReference>
<dbReference type="RefSeq" id="NP_001185091.1">
    <property type="nucleotide sequence ID" value="NM_001198162.2"/>
</dbReference>
<dbReference type="RefSeq" id="NP_001319077.1">
    <property type="nucleotide sequence ID" value="NM_001332666.1"/>
</dbReference>
<dbReference type="FunCoup" id="P0DI04">
    <property type="interactions" value="4"/>
</dbReference>
<dbReference type="STRING" id="3702.P0DI04"/>
<dbReference type="EnsemblPlants" id="AT1G24800.1">
    <property type="protein sequence ID" value="AT1G24800.1"/>
    <property type="gene ID" value="AT1G24800"/>
</dbReference>
<dbReference type="EnsemblPlants" id="AT1G24881.1">
    <property type="protein sequence ID" value="AT1G24881.1"/>
    <property type="gene ID" value="AT1G24881"/>
</dbReference>
<dbReference type="EnsemblPlants" id="AT1G25055.1">
    <property type="protein sequence ID" value="AT1G25055.1"/>
    <property type="gene ID" value="AT1G25055"/>
</dbReference>
<dbReference type="EnsemblPlants" id="AT1G25150.1">
    <property type="protein sequence ID" value="AT1G25150.1"/>
    <property type="gene ID" value="AT1G25150"/>
</dbReference>
<dbReference type="EnsemblPlants" id="AT1G25150.2">
    <property type="protein sequence ID" value="AT1G25150.2"/>
    <property type="gene ID" value="AT1G25150"/>
</dbReference>
<dbReference type="EnsemblPlants" id="AT1G25211.1">
    <property type="protein sequence ID" value="AT1G25211.1"/>
    <property type="gene ID" value="AT1G25211"/>
</dbReference>
<dbReference type="GeneID" id="6241002"/>
<dbReference type="Gramene" id="AT1G24800.1">
    <property type="protein sequence ID" value="AT1G24800.1"/>
    <property type="gene ID" value="AT1G24800"/>
</dbReference>
<dbReference type="Gramene" id="AT1G24881.1">
    <property type="protein sequence ID" value="AT1G24881.1"/>
    <property type="gene ID" value="AT1G24881"/>
</dbReference>
<dbReference type="Gramene" id="AT1G25055.1">
    <property type="protein sequence ID" value="AT1G25055.1"/>
    <property type="gene ID" value="AT1G25055"/>
</dbReference>
<dbReference type="Gramene" id="AT1G25150.1">
    <property type="protein sequence ID" value="AT1G25150.1"/>
    <property type="gene ID" value="AT1G25150"/>
</dbReference>
<dbReference type="Gramene" id="AT1G25150.2">
    <property type="protein sequence ID" value="AT1G25150.2"/>
    <property type="gene ID" value="AT1G25150"/>
</dbReference>
<dbReference type="Gramene" id="AT1G25211.1">
    <property type="protein sequence ID" value="AT1G25211.1"/>
    <property type="gene ID" value="AT1G25211"/>
</dbReference>
<dbReference type="KEGG" id="ath:AT1G24800"/>
<dbReference type="KEGG" id="ath:AT1G24881"/>
<dbReference type="KEGG" id="ath:AT1G25055"/>
<dbReference type="KEGG" id="ath:AT1G25150"/>
<dbReference type="KEGG" id="ath:AT1G25211"/>
<dbReference type="Araport" id="AT1G25055"/>
<dbReference type="TAIR" id="AT1G25055"/>
<dbReference type="HOGENOM" id="CLU_034692_0_0_1"/>
<dbReference type="InParanoid" id="P0DI04"/>
<dbReference type="PhylomeDB" id="P0DI04"/>
<dbReference type="PRO" id="PR:P0DI04"/>
<dbReference type="Proteomes" id="UP000006548">
    <property type="component" value="Chromosome 1"/>
</dbReference>
<dbReference type="ExpressionAtlas" id="P0DI04">
    <property type="expression patterns" value="baseline"/>
</dbReference>
<dbReference type="InterPro" id="IPR006527">
    <property type="entry name" value="F-box-assoc_dom_typ1"/>
</dbReference>
<dbReference type="InterPro" id="IPR017451">
    <property type="entry name" value="F-box-assoc_interact_dom"/>
</dbReference>
<dbReference type="InterPro" id="IPR036047">
    <property type="entry name" value="F-box-like_dom_sf"/>
</dbReference>
<dbReference type="InterPro" id="IPR011043">
    <property type="entry name" value="Gal_Oxase/kelch_b-propeller"/>
</dbReference>
<dbReference type="InterPro" id="IPR050796">
    <property type="entry name" value="SCF_F-box_component"/>
</dbReference>
<dbReference type="NCBIfam" id="TIGR01640">
    <property type="entry name" value="F_box_assoc_1"/>
    <property type="match status" value="1"/>
</dbReference>
<dbReference type="PANTHER" id="PTHR31672">
    <property type="entry name" value="BNACNNG10540D PROTEIN"/>
    <property type="match status" value="1"/>
</dbReference>
<dbReference type="PANTHER" id="PTHR31672:SF13">
    <property type="entry name" value="F-BOX PROTEIN CPR30-LIKE"/>
    <property type="match status" value="1"/>
</dbReference>
<dbReference type="Pfam" id="PF07734">
    <property type="entry name" value="FBA_1"/>
    <property type="match status" value="1"/>
</dbReference>
<dbReference type="SUPFAM" id="SSF81383">
    <property type="entry name" value="F-box domain"/>
    <property type="match status" value="1"/>
</dbReference>
<dbReference type="SUPFAM" id="SSF50965">
    <property type="entry name" value="Galactose oxidase, central domain"/>
    <property type="match status" value="1"/>
</dbReference>
<feature type="chain" id="PRO_0000415914" description="F-box/kelch-repeat protein At1g25055">
    <location>
        <begin position="1"/>
        <end position="433"/>
    </location>
</feature>
<feature type="domain" description="F-box">
    <location>
        <begin position="23"/>
        <end position="71"/>
    </location>
</feature>
<feature type="repeat" description="Kelch 1">
    <location>
        <begin position="170"/>
        <end position="216"/>
    </location>
</feature>
<feature type="repeat" description="Kelch 2">
    <location>
        <begin position="286"/>
        <end position="337"/>
    </location>
</feature>
<name>FBK12_ARATH</name>
<organism>
    <name type="scientific">Arabidopsis thaliana</name>
    <name type="common">Mouse-ear cress</name>
    <dbReference type="NCBI Taxonomy" id="3702"/>
    <lineage>
        <taxon>Eukaryota</taxon>
        <taxon>Viridiplantae</taxon>
        <taxon>Streptophyta</taxon>
        <taxon>Embryophyta</taxon>
        <taxon>Tracheophyta</taxon>
        <taxon>Spermatophyta</taxon>
        <taxon>Magnoliopsida</taxon>
        <taxon>eudicotyledons</taxon>
        <taxon>Gunneridae</taxon>
        <taxon>Pentapetalae</taxon>
        <taxon>rosids</taxon>
        <taxon>malvids</taxon>
        <taxon>Brassicales</taxon>
        <taxon>Brassicaceae</taxon>
        <taxon>Camelineae</taxon>
        <taxon>Arabidopsis</taxon>
    </lineage>
</organism>
<accession>P0DI04</accession>
<accession>Q0WR04</accession>
<accession>Q56X62</accession>
<accession>Q56XG9</accession>
<accession>Q7GAV1</accession>
<accession>Q8GRJ5</accession>
<accession>Q8RXU7</accession>
<accession>Q9FE36</accession>
<accession>Q9FXK3</accession>
<accession>Q9FXK7</accession>